<comment type="function">
    <text evidence="1">Transfers a GMP moiety from GTP to Mo-molybdopterin (Mo-MPT) cofactor (Moco or molybdenum cofactor) to form Mo-molybdopterin guanine dinucleotide (Mo-MGD) cofactor.</text>
</comment>
<comment type="catalytic activity">
    <reaction evidence="1">
        <text>Mo-molybdopterin + GTP + H(+) = Mo-molybdopterin guanine dinucleotide + diphosphate</text>
        <dbReference type="Rhea" id="RHEA:34243"/>
        <dbReference type="ChEBI" id="CHEBI:15378"/>
        <dbReference type="ChEBI" id="CHEBI:33019"/>
        <dbReference type="ChEBI" id="CHEBI:37565"/>
        <dbReference type="ChEBI" id="CHEBI:71302"/>
        <dbReference type="ChEBI" id="CHEBI:71310"/>
        <dbReference type="EC" id="2.7.7.77"/>
    </reaction>
</comment>
<comment type="cofactor">
    <cofactor evidence="1">
        <name>Mg(2+)</name>
        <dbReference type="ChEBI" id="CHEBI:18420"/>
    </cofactor>
</comment>
<comment type="subcellular location">
    <subcellularLocation>
        <location evidence="1">Cytoplasm</location>
    </subcellularLocation>
</comment>
<comment type="domain">
    <text evidence="1">The N-terminal domain determines nucleotide recognition and specific binding, while the C-terminal domain determines the specific binding to the target protein.</text>
</comment>
<comment type="similarity">
    <text evidence="1">Belongs to the MobA family.</text>
</comment>
<sequence>MSKYAGIVLAGGMSSRFGEPKALASWQGSTFIEHILKVMTSTLQEVVVISHSDIKERVEKLVQVPVIEDIPHYKGNGPLAGIVSGMEYIEADWYAIMPCDAPNVSHEWFTILLGQTSNEYDAVVPIINGRKQPLLAAYHNRVKEKIYALLQEEKRSMVQLLSQCNVKYIAGEDVQANADWFINVNTKEEYVQAQKDLSNK</sequence>
<feature type="chain" id="PRO_1000119555" description="Probable molybdenum cofactor guanylyltransferase">
    <location>
        <begin position="1"/>
        <end position="200"/>
    </location>
</feature>
<feature type="binding site" evidence="1">
    <location>
        <begin position="9"/>
        <end position="11"/>
    </location>
    <ligand>
        <name>GTP</name>
        <dbReference type="ChEBI" id="CHEBI:37565"/>
    </ligand>
</feature>
<feature type="binding site" evidence="1">
    <location>
        <position position="21"/>
    </location>
    <ligand>
        <name>GTP</name>
        <dbReference type="ChEBI" id="CHEBI:37565"/>
    </ligand>
</feature>
<feature type="binding site" evidence="1">
    <location>
        <position position="69"/>
    </location>
    <ligand>
        <name>GTP</name>
        <dbReference type="ChEBI" id="CHEBI:37565"/>
    </ligand>
</feature>
<feature type="binding site" evidence="1">
    <location>
        <position position="100"/>
    </location>
    <ligand>
        <name>GTP</name>
        <dbReference type="ChEBI" id="CHEBI:37565"/>
    </ligand>
</feature>
<feature type="binding site" evidence="1">
    <location>
        <position position="100"/>
    </location>
    <ligand>
        <name>Mg(2+)</name>
        <dbReference type="ChEBI" id="CHEBI:18420"/>
    </ligand>
</feature>
<proteinExistence type="inferred from homology"/>
<reference key="1">
    <citation type="submission" date="2008-10" db="EMBL/GenBank/DDBJ databases">
        <title>Genome sequence of Bacillus cereus AH820.</title>
        <authorList>
            <person name="Dodson R.J."/>
            <person name="Durkin A.S."/>
            <person name="Rosovitz M.J."/>
            <person name="Rasko D.A."/>
            <person name="Hoffmaster A."/>
            <person name="Ravel J."/>
            <person name="Sutton G."/>
        </authorList>
    </citation>
    <scope>NUCLEOTIDE SEQUENCE [LARGE SCALE GENOMIC DNA]</scope>
    <source>
        <strain>AH820</strain>
    </source>
</reference>
<protein>
    <recommendedName>
        <fullName evidence="1">Probable molybdenum cofactor guanylyltransferase</fullName>
        <shortName evidence="1">MoCo guanylyltransferase</shortName>
        <ecNumber evidence="1">2.7.7.77</ecNumber>
    </recommendedName>
    <alternativeName>
        <fullName evidence="1">GTP:molybdopterin guanylyltransferase</fullName>
    </alternativeName>
    <alternativeName>
        <fullName evidence="1">Mo-MPT guanylyltransferase</fullName>
    </alternativeName>
    <alternativeName>
        <fullName evidence="1">Molybdopterin guanylyltransferase</fullName>
    </alternativeName>
    <alternativeName>
        <fullName evidence="1">Molybdopterin-guanine dinucleotide synthase</fullName>
        <shortName evidence="1">MGD synthase</shortName>
    </alternativeName>
</protein>
<gene>
    <name evidence="1" type="primary">mobA</name>
    <name type="ordered locus">BCAH820_4882</name>
</gene>
<dbReference type="EC" id="2.7.7.77" evidence="1"/>
<dbReference type="EMBL" id="CP001283">
    <property type="protein sequence ID" value="ACK88386.1"/>
    <property type="molecule type" value="Genomic_DNA"/>
</dbReference>
<dbReference type="RefSeq" id="WP_000049607.1">
    <property type="nucleotide sequence ID" value="NC_011773.1"/>
</dbReference>
<dbReference type="SMR" id="B7JT28"/>
<dbReference type="KEGG" id="bcu:BCAH820_4882"/>
<dbReference type="HOGENOM" id="CLU_055597_2_0_9"/>
<dbReference type="Proteomes" id="UP000001363">
    <property type="component" value="Chromosome"/>
</dbReference>
<dbReference type="GO" id="GO:0005737">
    <property type="term" value="C:cytoplasm"/>
    <property type="evidence" value="ECO:0007669"/>
    <property type="project" value="UniProtKB-SubCell"/>
</dbReference>
<dbReference type="GO" id="GO:0005525">
    <property type="term" value="F:GTP binding"/>
    <property type="evidence" value="ECO:0007669"/>
    <property type="project" value="UniProtKB-UniRule"/>
</dbReference>
<dbReference type="GO" id="GO:0046872">
    <property type="term" value="F:metal ion binding"/>
    <property type="evidence" value="ECO:0007669"/>
    <property type="project" value="UniProtKB-KW"/>
</dbReference>
<dbReference type="GO" id="GO:0061603">
    <property type="term" value="F:molybdenum cofactor guanylyltransferase activity"/>
    <property type="evidence" value="ECO:0007669"/>
    <property type="project" value="UniProtKB-EC"/>
</dbReference>
<dbReference type="GO" id="GO:0006777">
    <property type="term" value="P:Mo-molybdopterin cofactor biosynthetic process"/>
    <property type="evidence" value="ECO:0007669"/>
    <property type="project" value="UniProtKB-KW"/>
</dbReference>
<dbReference type="CDD" id="cd02503">
    <property type="entry name" value="MobA"/>
    <property type="match status" value="1"/>
</dbReference>
<dbReference type="FunFam" id="3.90.550.10:FF:000121">
    <property type="entry name" value="Probable molybdenum cofactor guanylyltransferase"/>
    <property type="match status" value="1"/>
</dbReference>
<dbReference type="Gene3D" id="3.90.550.10">
    <property type="entry name" value="Spore Coat Polysaccharide Biosynthesis Protein SpsA, Chain A"/>
    <property type="match status" value="1"/>
</dbReference>
<dbReference type="HAMAP" id="MF_00316">
    <property type="entry name" value="MobA"/>
    <property type="match status" value="1"/>
</dbReference>
<dbReference type="InterPro" id="IPR025877">
    <property type="entry name" value="MobA-like_NTP_Trfase"/>
</dbReference>
<dbReference type="InterPro" id="IPR013482">
    <property type="entry name" value="Molybde_CF_guanTrfase"/>
</dbReference>
<dbReference type="InterPro" id="IPR029044">
    <property type="entry name" value="Nucleotide-diphossugar_trans"/>
</dbReference>
<dbReference type="PANTHER" id="PTHR19136">
    <property type="entry name" value="MOLYBDENUM COFACTOR GUANYLYLTRANSFERASE"/>
    <property type="match status" value="1"/>
</dbReference>
<dbReference type="PANTHER" id="PTHR19136:SF81">
    <property type="entry name" value="MOLYBDENUM COFACTOR GUANYLYLTRANSFERASE"/>
    <property type="match status" value="1"/>
</dbReference>
<dbReference type="Pfam" id="PF12804">
    <property type="entry name" value="NTP_transf_3"/>
    <property type="match status" value="1"/>
</dbReference>
<dbReference type="SUPFAM" id="SSF53448">
    <property type="entry name" value="Nucleotide-diphospho-sugar transferases"/>
    <property type="match status" value="1"/>
</dbReference>
<evidence type="ECO:0000255" key="1">
    <source>
        <dbReference type="HAMAP-Rule" id="MF_00316"/>
    </source>
</evidence>
<name>MOBA_BACC0</name>
<accession>B7JT28</accession>
<keyword id="KW-0963">Cytoplasm</keyword>
<keyword id="KW-0342">GTP-binding</keyword>
<keyword id="KW-0460">Magnesium</keyword>
<keyword id="KW-0479">Metal-binding</keyword>
<keyword id="KW-0501">Molybdenum cofactor biosynthesis</keyword>
<keyword id="KW-0547">Nucleotide-binding</keyword>
<keyword id="KW-0808">Transferase</keyword>
<organism>
    <name type="scientific">Bacillus cereus (strain AH820)</name>
    <dbReference type="NCBI Taxonomy" id="405535"/>
    <lineage>
        <taxon>Bacteria</taxon>
        <taxon>Bacillati</taxon>
        <taxon>Bacillota</taxon>
        <taxon>Bacilli</taxon>
        <taxon>Bacillales</taxon>
        <taxon>Bacillaceae</taxon>
        <taxon>Bacillus</taxon>
        <taxon>Bacillus cereus group</taxon>
    </lineage>
</organism>